<organism>
    <name type="scientific">Mycobacterium tuberculosis (strain ATCC 25618 / H37Rv)</name>
    <dbReference type="NCBI Taxonomy" id="83332"/>
    <lineage>
        <taxon>Bacteria</taxon>
        <taxon>Bacillati</taxon>
        <taxon>Actinomycetota</taxon>
        <taxon>Actinomycetes</taxon>
        <taxon>Mycobacteriales</taxon>
        <taxon>Mycobacteriaceae</taxon>
        <taxon>Mycobacterium</taxon>
        <taxon>Mycobacterium tuberculosis complex</taxon>
    </lineage>
</organism>
<comment type="catalytic activity">
    <reaction evidence="1">
        <text>(6R)-10-formyltetrahydrofolate + 5-amino-1-(5-phospho-beta-D-ribosyl)imidazole-4-carboxamide = 5-formamido-1-(5-phospho-D-ribosyl)imidazole-4-carboxamide + (6S)-5,6,7,8-tetrahydrofolate</text>
        <dbReference type="Rhea" id="RHEA:22192"/>
        <dbReference type="ChEBI" id="CHEBI:57453"/>
        <dbReference type="ChEBI" id="CHEBI:58467"/>
        <dbReference type="ChEBI" id="CHEBI:58475"/>
        <dbReference type="ChEBI" id="CHEBI:195366"/>
        <dbReference type="EC" id="2.1.2.3"/>
    </reaction>
</comment>
<comment type="catalytic activity">
    <reaction evidence="1">
        <text>IMP + H2O = 5-formamido-1-(5-phospho-D-ribosyl)imidazole-4-carboxamide</text>
        <dbReference type="Rhea" id="RHEA:18445"/>
        <dbReference type="ChEBI" id="CHEBI:15377"/>
        <dbReference type="ChEBI" id="CHEBI:58053"/>
        <dbReference type="ChEBI" id="CHEBI:58467"/>
        <dbReference type="EC" id="3.5.4.10"/>
    </reaction>
</comment>
<comment type="pathway">
    <text evidence="1">Purine metabolism; IMP biosynthesis via de novo pathway; 5-formamido-1-(5-phospho-D-ribosyl)imidazole-4-carboxamide from 5-amino-1-(5-phospho-D-ribosyl)imidazole-4-carboxamide (10-formyl THF route): step 1/1.</text>
</comment>
<comment type="pathway">
    <text evidence="1">Purine metabolism; IMP biosynthesis via de novo pathway; IMP from 5-formamido-1-(5-phospho-D-ribosyl)imidazole-4-carboxamide: step 1/1.</text>
</comment>
<comment type="domain">
    <text evidence="1">The IMP cyclohydrolase activity resides in the N-terminal region.</text>
</comment>
<comment type="similarity">
    <text evidence="1 3">Belongs to the PurH family.</text>
</comment>
<gene>
    <name evidence="1" type="primary">purH</name>
    <name type="ordered locus">Rv0957</name>
    <name type="ORF">MTCY10D7.17c</name>
</gene>
<accession>P9WHM7</accession>
<accession>L0T5A3</accession>
<accession>P67541</accession>
<accession>P71553</accession>
<dbReference type="EC" id="2.1.2.3" evidence="1"/>
<dbReference type="EC" id="3.5.4.10" evidence="1"/>
<dbReference type="EMBL" id="AL123456">
    <property type="protein sequence ID" value="CCP43705.1"/>
    <property type="molecule type" value="Genomic_DNA"/>
</dbReference>
<dbReference type="PIR" id="C70717">
    <property type="entry name" value="C70717"/>
</dbReference>
<dbReference type="RefSeq" id="NP_215472.1">
    <property type="nucleotide sequence ID" value="NC_000962.3"/>
</dbReference>
<dbReference type="RefSeq" id="WP_003404890.1">
    <property type="nucleotide sequence ID" value="NZ_NVQJ01000001.1"/>
</dbReference>
<dbReference type="PDB" id="3ZZM">
    <property type="method" value="X-ray"/>
    <property type="resolution" value="2.20 A"/>
    <property type="chains" value="A/B=1-523"/>
</dbReference>
<dbReference type="PDB" id="4A1O">
    <property type="method" value="X-ray"/>
    <property type="resolution" value="2.48 A"/>
    <property type="chains" value="A/B=1-523"/>
</dbReference>
<dbReference type="PDBsum" id="3ZZM"/>
<dbReference type="PDBsum" id="4A1O"/>
<dbReference type="SMR" id="P9WHM7"/>
<dbReference type="FunCoup" id="P9WHM7">
    <property type="interactions" value="469"/>
</dbReference>
<dbReference type="STRING" id="83332.Rv0957"/>
<dbReference type="PaxDb" id="83332-Rv0957"/>
<dbReference type="DNASU" id="885406"/>
<dbReference type="GeneID" id="885406"/>
<dbReference type="KEGG" id="mtu:Rv0957"/>
<dbReference type="KEGG" id="mtv:RVBD_0957"/>
<dbReference type="TubercuList" id="Rv0957"/>
<dbReference type="eggNOG" id="COG0138">
    <property type="taxonomic scope" value="Bacteria"/>
</dbReference>
<dbReference type="InParanoid" id="P9WHM7"/>
<dbReference type="OrthoDB" id="9802065at2"/>
<dbReference type="PhylomeDB" id="P9WHM7"/>
<dbReference type="UniPathway" id="UPA00074">
    <property type="reaction ID" value="UER00133"/>
</dbReference>
<dbReference type="UniPathway" id="UPA00074">
    <property type="reaction ID" value="UER00135"/>
</dbReference>
<dbReference type="EvolutionaryTrace" id="P9WHM7"/>
<dbReference type="Proteomes" id="UP000001584">
    <property type="component" value="Chromosome"/>
</dbReference>
<dbReference type="GO" id="GO:0005829">
    <property type="term" value="C:cytosol"/>
    <property type="evidence" value="ECO:0000318"/>
    <property type="project" value="GO_Central"/>
</dbReference>
<dbReference type="GO" id="GO:0005886">
    <property type="term" value="C:plasma membrane"/>
    <property type="evidence" value="ECO:0007005"/>
    <property type="project" value="MTBBASE"/>
</dbReference>
<dbReference type="GO" id="GO:0003937">
    <property type="term" value="F:IMP cyclohydrolase activity"/>
    <property type="evidence" value="ECO:0000318"/>
    <property type="project" value="GO_Central"/>
</dbReference>
<dbReference type="GO" id="GO:0004643">
    <property type="term" value="F:phosphoribosylaminoimidazolecarboxamide formyltransferase activity"/>
    <property type="evidence" value="ECO:0000318"/>
    <property type="project" value="GO_Central"/>
</dbReference>
<dbReference type="GO" id="GO:0006189">
    <property type="term" value="P:'de novo' IMP biosynthetic process"/>
    <property type="evidence" value="ECO:0000318"/>
    <property type="project" value="GO_Central"/>
</dbReference>
<dbReference type="CDD" id="cd01421">
    <property type="entry name" value="IMPCH"/>
    <property type="match status" value="1"/>
</dbReference>
<dbReference type="FunFam" id="3.40.140.20:FF:000001">
    <property type="entry name" value="Bifunctional purine biosynthesis protein PurH"/>
    <property type="match status" value="1"/>
</dbReference>
<dbReference type="FunFam" id="3.40.50.1380:FF:000001">
    <property type="entry name" value="Bifunctional purine biosynthesis protein PurH"/>
    <property type="match status" value="1"/>
</dbReference>
<dbReference type="Gene3D" id="3.40.140.20">
    <property type="match status" value="2"/>
</dbReference>
<dbReference type="Gene3D" id="3.40.50.1380">
    <property type="entry name" value="Methylglyoxal synthase-like domain"/>
    <property type="match status" value="1"/>
</dbReference>
<dbReference type="HAMAP" id="MF_00139">
    <property type="entry name" value="PurH"/>
    <property type="match status" value="1"/>
</dbReference>
<dbReference type="InterPro" id="IPR024051">
    <property type="entry name" value="AICAR_Tfase_dup_dom_sf"/>
</dbReference>
<dbReference type="InterPro" id="IPR016193">
    <property type="entry name" value="Cytidine_deaminase-like"/>
</dbReference>
<dbReference type="InterPro" id="IPR011607">
    <property type="entry name" value="MGS-like_dom"/>
</dbReference>
<dbReference type="InterPro" id="IPR036914">
    <property type="entry name" value="MGS-like_dom_sf"/>
</dbReference>
<dbReference type="InterPro" id="IPR002695">
    <property type="entry name" value="PurH-like"/>
</dbReference>
<dbReference type="NCBIfam" id="NF002049">
    <property type="entry name" value="PRK00881.1"/>
    <property type="match status" value="1"/>
</dbReference>
<dbReference type="NCBIfam" id="TIGR00355">
    <property type="entry name" value="purH"/>
    <property type="match status" value="1"/>
</dbReference>
<dbReference type="PANTHER" id="PTHR11692:SF0">
    <property type="entry name" value="BIFUNCTIONAL PURINE BIOSYNTHESIS PROTEIN ATIC"/>
    <property type="match status" value="1"/>
</dbReference>
<dbReference type="PANTHER" id="PTHR11692">
    <property type="entry name" value="BIFUNCTIONAL PURINE BIOSYNTHESIS PROTEIN PURH"/>
    <property type="match status" value="1"/>
</dbReference>
<dbReference type="Pfam" id="PF01808">
    <property type="entry name" value="AICARFT_IMPCHas"/>
    <property type="match status" value="1"/>
</dbReference>
<dbReference type="Pfam" id="PF02142">
    <property type="entry name" value="MGS"/>
    <property type="match status" value="1"/>
</dbReference>
<dbReference type="PIRSF" id="PIRSF000414">
    <property type="entry name" value="AICARFT_IMPCHas"/>
    <property type="match status" value="1"/>
</dbReference>
<dbReference type="SMART" id="SM00798">
    <property type="entry name" value="AICARFT_IMPCHas"/>
    <property type="match status" value="1"/>
</dbReference>
<dbReference type="SMART" id="SM00851">
    <property type="entry name" value="MGS"/>
    <property type="match status" value="1"/>
</dbReference>
<dbReference type="SUPFAM" id="SSF53927">
    <property type="entry name" value="Cytidine deaminase-like"/>
    <property type="match status" value="1"/>
</dbReference>
<dbReference type="SUPFAM" id="SSF52335">
    <property type="entry name" value="Methylglyoxal synthase-like"/>
    <property type="match status" value="1"/>
</dbReference>
<dbReference type="PROSITE" id="PS51855">
    <property type="entry name" value="MGS"/>
    <property type="match status" value="1"/>
</dbReference>
<reference key="1">
    <citation type="journal article" date="1998" name="Nature">
        <title>Deciphering the biology of Mycobacterium tuberculosis from the complete genome sequence.</title>
        <authorList>
            <person name="Cole S.T."/>
            <person name="Brosch R."/>
            <person name="Parkhill J."/>
            <person name="Garnier T."/>
            <person name="Churcher C.M."/>
            <person name="Harris D.E."/>
            <person name="Gordon S.V."/>
            <person name="Eiglmeier K."/>
            <person name="Gas S."/>
            <person name="Barry C.E. III"/>
            <person name="Tekaia F."/>
            <person name="Badcock K."/>
            <person name="Basham D."/>
            <person name="Brown D."/>
            <person name="Chillingworth T."/>
            <person name="Connor R."/>
            <person name="Davies R.M."/>
            <person name="Devlin K."/>
            <person name="Feltwell T."/>
            <person name="Gentles S."/>
            <person name="Hamlin N."/>
            <person name="Holroyd S."/>
            <person name="Hornsby T."/>
            <person name="Jagels K."/>
            <person name="Krogh A."/>
            <person name="McLean J."/>
            <person name="Moule S."/>
            <person name="Murphy L.D."/>
            <person name="Oliver S."/>
            <person name="Osborne J."/>
            <person name="Quail M.A."/>
            <person name="Rajandream M.A."/>
            <person name="Rogers J."/>
            <person name="Rutter S."/>
            <person name="Seeger K."/>
            <person name="Skelton S."/>
            <person name="Squares S."/>
            <person name="Squares R."/>
            <person name="Sulston J.E."/>
            <person name="Taylor K."/>
            <person name="Whitehead S."/>
            <person name="Barrell B.G."/>
        </authorList>
    </citation>
    <scope>NUCLEOTIDE SEQUENCE [LARGE SCALE GENOMIC DNA]</scope>
    <source>
        <strain>ATCC 25618 / H37Rv</strain>
    </source>
</reference>
<reference key="2">
    <citation type="journal article" date="2011" name="Mol. Cell. Proteomics">
        <title>Proteogenomic analysis of Mycobacterium tuberculosis by high resolution mass spectrometry.</title>
        <authorList>
            <person name="Kelkar D.S."/>
            <person name="Kumar D."/>
            <person name="Kumar P."/>
            <person name="Balakrishnan L."/>
            <person name="Muthusamy B."/>
            <person name="Yadav A.K."/>
            <person name="Shrivastava P."/>
            <person name="Marimuthu A."/>
            <person name="Anand S."/>
            <person name="Sundaram H."/>
            <person name="Kingsbury R."/>
            <person name="Harsha H.C."/>
            <person name="Nair B."/>
            <person name="Prasad T.S."/>
            <person name="Chauhan D.S."/>
            <person name="Katoch K."/>
            <person name="Katoch V.M."/>
            <person name="Kumar P."/>
            <person name="Chaerkady R."/>
            <person name="Ramachandran S."/>
            <person name="Dash D."/>
            <person name="Pandey A."/>
        </authorList>
    </citation>
    <scope>IDENTIFICATION BY MASS SPECTROMETRY [LARGE SCALE ANALYSIS]</scope>
    <source>
        <strain>ATCC 25618 / H37Rv</strain>
    </source>
</reference>
<feature type="chain" id="PRO_0000192106" description="Bifunctional purine biosynthesis protein PurH">
    <location>
        <begin position="1"/>
        <end position="523"/>
    </location>
</feature>
<feature type="domain" description="MGS-like" evidence="2">
    <location>
        <begin position="1"/>
        <end position="152"/>
    </location>
</feature>
<feature type="strand" evidence="4">
    <location>
        <begin position="12"/>
        <end position="19"/>
    </location>
</feature>
<feature type="helix" evidence="4">
    <location>
        <begin position="23"/>
        <end position="32"/>
    </location>
</feature>
<feature type="strand" evidence="4">
    <location>
        <begin position="36"/>
        <end position="39"/>
    </location>
</feature>
<feature type="helix" evidence="4">
    <location>
        <begin position="41"/>
        <end position="48"/>
    </location>
</feature>
<feature type="turn" evidence="4">
    <location>
        <begin position="49"/>
        <end position="51"/>
    </location>
</feature>
<feature type="helix" evidence="4">
    <location>
        <begin position="57"/>
        <end position="61"/>
    </location>
</feature>
<feature type="turn" evidence="4">
    <location>
        <begin position="67"/>
        <end position="70"/>
    </location>
</feature>
<feature type="strand" evidence="4">
    <location>
        <begin position="71"/>
        <end position="73"/>
    </location>
</feature>
<feature type="helix" evidence="4">
    <location>
        <begin position="76"/>
        <end position="83"/>
    </location>
</feature>
<feature type="helix" evidence="4">
    <location>
        <begin position="89"/>
        <end position="98"/>
    </location>
</feature>
<feature type="strand" evidence="4">
    <location>
        <begin position="104"/>
        <end position="109"/>
    </location>
</feature>
<feature type="helix" evidence="4">
    <location>
        <begin position="113"/>
        <end position="118"/>
    </location>
</feature>
<feature type="helix" evidence="4">
    <location>
        <begin position="123"/>
        <end position="128"/>
    </location>
</feature>
<feature type="helix" evidence="4">
    <location>
        <begin position="133"/>
        <end position="143"/>
    </location>
</feature>
<feature type="turn" evidence="4">
    <location>
        <begin position="144"/>
        <end position="147"/>
    </location>
</feature>
<feature type="strand" evidence="4">
    <location>
        <begin position="149"/>
        <end position="151"/>
    </location>
</feature>
<feature type="helix" evidence="4">
    <location>
        <begin position="154"/>
        <end position="156"/>
    </location>
</feature>
<feature type="helix" evidence="4">
    <location>
        <begin position="157"/>
        <end position="165"/>
    </location>
</feature>
<feature type="helix" evidence="4">
    <location>
        <begin position="171"/>
        <end position="198"/>
    </location>
</feature>
<feature type="strand" evidence="4">
    <location>
        <begin position="211"/>
        <end position="222"/>
    </location>
</feature>
<feature type="strand" evidence="4">
    <location>
        <begin position="226"/>
        <end position="228"/>
    </location>
</feature>
<feature type="strand" evidence="4">
    <location>
        <begin position="233"/>
        <end position="237"/>
    </location>
</feature>
<feature type="strand" evidence="5">
    <location>
        <begin position="239"/>
        <end position="241"/>
    </location>
</feature>
<feature type="helix" evidence="4">
    <location>
        <begin position="245"/>
        <end position="247"/>
    </location>
</feature>
<feature type="strand" evidence="4">
    <location>
        <begin position="249"/>
        <end position="254"/>
    </location>
</feature>
<feature type="helix" evidence="4">
    <location>
        <begin position="258"/>
        <end position="271"/>
    </location>
</feature>
<feature type="strand" evidence="4">
    <location>
        <begin position="274"/>
        <end position="283"/>
    </location>
</feature>
<feature type="strand" evidence="4">
    <location>
        <begin position="286"/>
        <end position="295"/>
    </location>
</feature>
<feature type="helix" evidence="4">
    <location>
        <begin position="297"/>
        <end position="305"/>
    </location>
</feature>
<feature type="helix" evidence="4">
    <location>
        <begin position="309"/>
        <end position="312"/>
    </location>
</feature>
<feature type="strand" evidence="4">
    <location>
        <begin position="315"/>
        <end position="321"/>
    </location>
</feature>
<feature type="helix" evidence="4">
    <location>
        <begin position="325"/>
        <end position="331"/>
    </location>
</feature>
<feature type="strand" evidence="4">
    <location>
        <begin position="336"/>
        <end position="342"/>
    </location>
</feature>
<feature type="helix" evidence="4">
    <location>
        <begin position="348"/>
        <end position="352"/>
    </location>
</feature>
<feature type="strand" evidence="4">
    <location>
        <begin position="355"/>
        <end position="357"/>
    </location>
</feature>
<feature type="strand" evidence="4">
    <location>
        <begin position="359"/>
        <end position="362"/>
    </location>
</feature>
<feature type="strand" evidence="4">
    <location>
        <begin position="371"/>
        <end position="376"/>
    </location>
</feature>
<feature type="strand" evidence="4">
    <location>
        <begin position="379"/>
        <end position="384"/>
    </location>
</feature>
<feature type="helix" evidence="4">
    <location>
        <begin position="391"/>
        <end position="393"/>
    </location>
</feature>
<feature type="helix" evidence="4">
    <location>
        <begin position="395"/>
        <end position="397"/>
    </location>
</feature>
<feature type="strand" evidence="4">
    <location>
        <begin position="399"/>
        <end position="404"/>
    </location>
</feature>
<feature type="helix" evidence="4">
    <location>
        <begin position="408"/>
        <end position="420"/>
    </location>
</feature>
<feature type="helix" evidence="4">
    <location>
        <begin position="421"/>
        <end position="423"/>
    </location>
</feature>
<feature type="strand" evidence="4">
    <location>
        <begin position="429"/>
        <end position="433"/>
    </location>
</feature>
<feature type="strand" evidence="4">
    <location>
        <begin position="436"/>
        <end position="441"/>
    </location>
</feature>
<feature type="helix" evidence="4">
    <location>
        <begin position="447"/>
        <end position="458"/>
    </location>
</feature>
<feature type="helix" evidence="4">
    <location>
        <begin position="459"/>
        <end position="461"/>
    </location>
</feature>
<feature type="strand" evidence="4">
    <location>
        <begin position="466"/>
        <end position="471"/>
    </location>
</feature>
<feature type="helix" evidence="4">
    <location>
        <begin position="476"/>
        <end position="484"/>
    </location>
</feature>
<feature type="strand" evidence="4">
    <location>
        <begin position="489"/>
        <end position="492"/>
    </location>
</feature>
<feature type="helix" evidence="4">
    <location>
        <begin position="499"/>
        <end position="509"/>
    </location>
</feature>
<feature type="strand" evidence="4">
    <location>
        <begin position="512"/>
        <end position="515"/>
    </location>
</feature>
<name>PUR9_MYCTU</name>
<proteinExistence type="evidence at protein level"/>
<sequence>MSTDDGRRPIRRALISVYDKTGLVDLAQGLSAAGVEIISTGSTAKTIADTGIPVTPVEQLTGFPEVLDGRVKTLHPRVHAGLLADLRKSEHAAALEQLGIEAFELVVVNLYPFSQTVESGASVDDCVEQIDIGGPAMVRAAAKNHPSAAVVTDPLGYHGVLAALRAGGFTLAERKRLASLAFQHIAEYDIAVASWMQQTLAPEHPVAAFPQWFGRSWRRVAMLRYGENPHQQAALYGDPTAWPGLAQAEQLHGKDMSYNNFTDADAAWRAAFDHEQTCVAIIKHANPCGIAISSVSVADAHRKAHECDPLSAYGGVIAANTEVSVEMAEYVSTIFTEVIVAPGYAPGALDVLARKKNIRVLVAAEPLAGGSELRPISGGLLIQQSDQLDAHGDNPANWTLATGSPADPATLTDLVFAWRACRAVKSNAIVIAADGATVGVGMGQVNRVDAARLAVERGGERVRGAVAASDAFFPFPDGLETLAAAGVTAVVHPGGSVRDEEVTEAAAKAGVTLYLTGARHFAH</sequence>
<protein>
    <recommendedName>
        <fullName evidence="1">Bifunctional purine biosynthesis protein PurH</fullName>
    </recommendedName>
    <domain>
        <recommendedName>
            <fullName evidence="1">Phosphoribosylaminoimidazolecarboxamide formyltransferase</fullName>
            <ecNumber evidence="1">2.1.2.3</ecNumber>
        </recommendedName>
        <alternativeName>
            <fullName evidence="1">AICAR transformylase</fullName>
        </alternativeName>
    </domain>
    <domain>
        <recommendedName>
            <fullName evidence="1">IMP cyclohydrolase</fullName>
            <ecNumber evidence="1">3.5.4.10</ecNumber>
        </recommendedName>
        <alternativeName>
            <fullName evidence="1">ATIC</fullName>
        </alternativeName>
        <alternativeName>
            <fullName evidence="1">IMP synthase</fullName>
        </alternativeName>
        <alternativeName>
            <fullName evidence="1">Inosinicase</fullName>
        </alternativeName>
    </domain>
</protein>
<evidence type="ECO:0000255" key="1">
    <source>
        <dbReference type="HAMAP-Rule" id="MF_00139"/>
    </source>
</evidence>
<evidence type="ECO:0000255" key="2">
    <source>
        <dbReference type="PROSITE-ProRule" id="PRU01202"/>
    </source>
</evidence>
<evidence type="ECO:0000305" key="3"/>
<evidence type="ECO:0007829" key="4">
    <source>
        <dbReference type="PDB" id="3ZZM"/>
    </source>
</evidence>
<evidence type="ECO:0007829" key="5">
    <source>
        <dbReference type="PDB" id="4A1O"/>
    </source>
</evidence>
<keyword id="KW-0002">3D-structure</keyword>
<keyword id="KW-0378">Hydrolase</keyword>
<keyword id="KW-0511">Multifunctional enzyme</keyword>
<keyword id="KW-0658">Purine biosynthesis</keyword>
<keyword id="KW-1185">Reference proteome</keyword>
<keyword id="KW-0808">Transferase</keyword>